<comment type="function">
    <text evidence="1">Hydrolyzes ribosome-free peptidyl-tRNAs (with 1 or more amino acids incorporated), which drop off the ribosome during protein synthesis, or as a result of ribosome stalling.</text>
</comment>
<comment type="function">
    <text evidence="1">Catalyzes the release of premature peptidyl moieties from peptidyl-tRNA molecules trapped in stalled 50S ribosomal subunits, and thus maintains levels of free tRNAs and 50S ribosomes.</text>
</comment>
<comment type="catalytic activity">
    <reaction evidence="1">
        <text>an N-acyl-L-alpha-aminoacyl-tRNA + H2O = an N-acyl-L-amino acid + a tRNA + H(+)</text>
        <dbReference type="Rhea" id="RHEA:54448"/>
        <dbReference type="Rhea" id="RHEA-COMP:10123"/>
        <dbReference type="Rhea" id="RHEA-COMP:13883"/>
        <dbReference type="ChEBI" id="CHEBI:15377"/>
        <dbReference type="ChEBI" id="CHEBI:15378"/>
        <dbReference type="ChEBI" id="CHEBI:59874"/>
        <dbReference type="ChEBI" id="CHEBI:78442"/>
        <dbReference type="ChEBI" id="CHEBI:138191"/>
        <dbReference type="EC" id="3.1.1.29"/>
    </reaction>
</comment>
<comment type="subunit">
    <text evidence="1">Monomer.</text>
</comment>
<comment type="subcellular location">
    <subcellularLocation>
        <location evidence="1">Cytoplasm</location>
    </subcellularLocation>
</comment>
<comment type="similarity">
    <text evidence="1">Belongs to the PTH family.</text>
</comment>
<name>PTH_RHIR8</name>
<feature type="chain" id="PRO_1000192952" description="Peptidyl-tRNA hydrolase">
    <location>
        <begin position="1"/>
        <end position="238"/>
    </location>
</feature>
<feature type="region of interest" description="Disordered" evidence="2">
    <location>
        <begin position="190"/>
        <end position="225"/>
    </location>
</feature>
<feature type="compositionally biased region" description="Basic and acidic residues" evidence="2">
    <location>
        <begin position="190"/>
        <end position="202"/>
    </location>
</feature>
<feature type="compositionally biased region" description="Basic residues" evidence="2">
    <location>
        <begin position="203"/>
        <end position="212"/>
    </location>
</feature>
<feature type="active site" description="Proton acceptor" evidence="1">
    <location>
        <position position="19"/>
    </location>
</feature>
<feature type="binding site" evidence="1">
    <location>
        <position position="14"/>
    </location>
    <ligand>
        <name>tRNA</name>
        <dbReference type="ChEBI" id="CHEBI:17843"/>
    </ligand>
</feature>
<feature type="binding site" evidence="1">
    <location>
        <position position="64"/>
    </location>
    <ligand>
        <name>tRNA</name>
        <dbReference type="ChEBI" id="CHEBI:17843"/>
    </ligand>
</feature>
<feature type="binding site" evidence="1">
    <location>
        <position position="66"/>
    </location>
    <ligand>
        <name>tRNA</name>
        <dbReference type="ChEBI" id="CHEBI:17843"/>
    </ligand>
</feature>
<feature type="binding site" evidence="1">
    <location>
        <position position="112"/>
    </location>
    <ligand>
        <name>tRNA</name>
        <dbReference type="ChEBI" id="CHEBI:17843"/>
    </ligand>
</feature>
<feature type="site" description="Discriminates between blocked and unblocked aminoacyl-tRNA" evidence="1">
    <location>
        <position position="9"/>
    </location>
</feature>
<feature type="site" description="Stabilizes the basic form of H active site to accept a proton" evidence="1">
    <location>
        <position position="91"/>
    </location>
</feature>
<proteinExistence type="inferred from homology"/>
<sequence>MLLIVGLGNPGAKYQGNRHNIGFMAVDAIHRRHSFSPWAKKFRAEISEGELGGQKVLLIKPQTFMNLSGESVGEAMRFYKLEPSDLVVIYDELDLPAAKARLKTGGGHGGHNGIKSIDAHCGREYRRLRLGIGHPGVKELVQNHVLGDFAKVDRDWLEPLFDALADNADMLVRGEDSQLMNKIALALGGKTEEPAPKPEKKTVAKSHIHQARNHNQPRMPESGPMAEMLKRMFGKKDD</sequence>
<dbReference type="EC" id="3.1.1.29" evidence="1"/>
<dbReference type="EMBL" id="CP000628">
    <property type="protein sequence ID" value="ACM27202.1"/>
    <property type="molecule type" value="Genomic_DNA"/>
</dbReference>
<dbReference type="RefSeq" id="WP_012651938.1">
    <property type="nucleotide sequence ID" value="NC_011985.1"/>
</dbReference>
<dbReference type="SMR" id="B9J795"/>
<dbReference type="STRING" id="311403.Arad_3192"/>
<dbReference type="GeneID" id="86849074"/>
<dbReference type="KEGG" id="ara:Arad_3192"/>
<dbReference type="eggNOG" id="COG0193">
    <property type="taxonomic scope" value="Bacteria"/>
</dbReference>
<dbReference type="HOGENOM" id="CLU_062456_1_1_5"/>
<dbReference type="Proteomes" id="UP000001600">
    <property type="component" value="Chromosome 1"/>
</dbReference>
<dbReference type="GO" id="GO:0005737">
    <property type="term" value="C:cytoplasm"/>
    <property type="evidence" value="ECO:0007669"/>
    <property type="project" value="UniProtKB-SubCell"/>
</dbReference>
<dbReference type="GO" id="GO:0004045">
    <property type="term" value="F:peptidyl-tRNA hydrolase activity"/>
    <property type="evidence" value="ECO:0007669"/>
    <property type="project" value="UniProtKB-UniRule"/>
</dbReference>
<dbReference type="GO" id="GO:0000049">
    <property type="term" value="F:tRNA binding"/>
    <property type="evidence" value="ECO:0007669"/>
    <property type="project" value="UniProtKB-UniRule"/>
</dbReference>
<dbReference type="GO" id="GO:0006515">
    <property type="term" value="P:protein quality control for misfolded or incompletely synthesized proteins"/>
    <property type="evidence" value="ECO:0007669"/>
    <property type="project" value="UniProtKB-UniRule"/>
</dbReference>
<dbReference type="GO" id="GO:0072344">
    <property type="term" value="P:rescue of stalled ribosome"/>
    <property type="evidence" value="ECO:0007669"/>
    <property type="project" value="UniProtKB-UniRule"/>
</dbReference>
<dbReference type="CDD" id="cd00462">
    <property type="entry name" value="PTH"/>
    <property type="match status" value="1"/>
</dbReference>
<dbReference type="FunFam" id="3.40.50.1470:FF:000001">
    <property type="entry name" value="Peptidyl-tRNA hydrolase"/>
    <property type="match status" value="1"/>
</dbReference>
<dbReference type="Gene3D" id="3.40.50.1470">
    <property type="entry name" value="Peptidyl-tRNA hydrolase"/>
    <property type="match status" value="1"/>
</dbReference>
<dbReference type="HAMAP" id="MF_00083">
    <property type="entry name" value="Pept_tRNA_hydro_bact"/>
    <property type="match status" value="1"/>
</dbReference>
<dbReference type="InterPro" id="IPR001328">
    <property type="entry name" value="Pept_tRNA_hydro"/>
</dbReference>
<dbReference type="InterPro" id="IPR018171">
    <property type="entry name" value="Pept_tRNA_hydro_CS"/>
</dbReference>
<dbReference type="InterPro" id="IPR036416">
    <property type="entry name" value="Pept_tRNA_hydro_sf"/>
</dbReference>
<dbReference type="NCBIfam" id="TIGR00447">
    <property type="entry name" value="pth"/>
    <property type="match status" value="1"/>
</dbReference>
<dbReference type="PANTHER" id="PTHR17224">
    <property type="entry name" value="PEPTIDYL-TRNA HYDROLASE"/>
    <property type="match status" value="1"/>
</dbReference>
<dbReference type="PANTHER" id="PTHR17224:SF1">
    <property type="entry name" value="PEPTIDYL-TRNA HYDROLASE"/>
    <property type="match status" value="1"/>
</dbReference>
<dbReference type="Pfam" id="PF01195">
    <property type="entry name" value="Pept_tRNA_hydro"/>
    <property type="match status" value="1"/>
</dbReference>
<dbReference type="SUPFAM" id="SSF53178">
    <property type="entry name" value="Peptidyl-tRNA hydrolase-like"/>
    <property type="match status" value="1"/>
</dbReference>
<dbReference type="PROSITE" id="PS01195">
    <property type="entry name" value="PEPT_TRNA_HYDROL_1"/>
    <property type="match status" value="1"/>
</dbReference>
<dbReference type="PROSITE" id="PS01196">
    <property type="entry name" value="PEPT_TRNA_HYDROL_2"/>
    <property type="match status" value="1"/>
</dbReference>
<reference key="1">
    <citation type="journal article" date="2009" name="J. Bacteriol.">
        <title>Genome sequences of three Agrobacterium biovars help elucidate the evolution of multichromosome genomes in bacteria.</title>
        <authorList>
            <person name="Slater S.C."/>
            <person name="Goldman B.S."/>
            <person name="Goodner B."/>
            <person name="Setubal J.C."/>
            <person name="Farrand S.K."/>
            <person name="Nester E.W."/>
            <person name="Burr T.J."/>
            <person name="Banta L."/>
            <person name="Dickerman A.W."/>
            <person name="Paulsen I."/>
            <person name="Otten L."/>
            <person name="Suen G."/>
            <person name="Welch R."/>
            <person name="Almeida N.F."/>
            <person name="Arnold F."/>
            <person name="Burton O.T."/>
            <person name="Du Z."/>
            <person name="Ewing A."/>
            <person name="Godsy E."/>
            <person name="Heisel S."/>
            <person name="Houmiel K.L."/>
            <person name="Jhaveri J."/>
            <person name="Lu J."/>
            <person name="Miller N.M."/>
            <person name="Norton S."/>
            <person name="Chen Q."/>
            <person name="Phoolcharoen W."/>
            <person name="Ohlin V."/>
            <person name="Ondrusek D."/>
            <person name="Pride N."/>
            <person name="Stricklin S.L."/>
            <person name="Sun J."/>
            <person name="Wheeler C."/>
            <person name="Wilson L."/>
            <person name="Zhu H."/>
            <person name="Wood D.W."/>
        </authorList>
    </citation>
    <scope>NUCLEOTIDE SEQUENCE [LARGE SCALE GENOMIC DNA]</scope>
    <source>
        <strain>K84 / ATCC BAA-868</strain>
    </source>
</reference>
<protein>
    <recommendedName>
        <fullName evidence="1">Peptidyl-tRNA hydrolase</fullName>
        <shortName evidence="1">Pth</shortName>
        <ecNumber evidence="1">3.1.1.29</ecNumber>
    </recommendedName>
</protein>
<evidence type="ECO:0000255" key="1">
    <source>
        <dbReference type="HAMAP-Rule" id="MF_00083"/>
    </source>
</evidence>
<evidence type="ECO:0000256" key="2">
    <source>
        <dbReference type="SAM" id="MobiDB-lite"/>
    </source>
</evidence>
<keyword id="KW-0963">Cytoplasm</keyword>
<keyword id="KW-0378">Hydrolase</keyword>
<keyword id="KW-0694">RNA-binding</keyword>
<keyword id="KW-0820">tRNA-binding</keyword>
<accession>B9J795</accession>
<gene>
    <name evidence="1" type="primary">pth</name>
    <name type="ordered locus">Arad_3192</name>
</gene>
<organism>
    <name type="scientific">Rhizobium rhizogenes (strain K84 / ATCC BAA-868)</name>
    <name type="common">Agrobacterium radiobacter</name>
    <dbReference type="NCBI Taxonomy" id="311403"/>
    <lineage>
        <taxon>Bacteria</taxon>
        <taxon>Pseudomonadati</taxon>
        <taxon>Pseudomonadota</taxon>
        <taxon>Alphaproteobacteria</taxon>
        <taxon>Hyphomicrobiales</taxon>
        <taxon>Rhizobiaceae</taxon>
        <taxon>Rhizobium/Agrobacterium group</taxon>
        <taxon>Rhizobium</taxon>
    </lineage>
</organism>